<protein>
    <recommendedName>
        <fullName evidence="2">Flap endonuclease 1</fullName>
        <shortName evidence="2">FEN-1</shortName>
        <ecNumber evidence="2">3.1.-.-</ecNumber>
    </recommendedName>
    <alternativeName>
        <fullName evidence="2">Flap structure-specific endonuclease 1</fullName>
    </alternativeName>
</protein>
<reference key="1">
    <citation type="journal article" date="2002" name="Proc. Natl. Acad. Sci. U.S.A.">
        <title>Genome sequence of the hyperthermophilic crenarchaeon Pyrobaculum aerophilum.</title>
        <authorList>
            <person name="Fitz-Gibbon S.T."/>
            <person name="Ladner H."/>
            <person name="Kim U.-J."/>
            <person name="Stetter K.O."/>
            <person name="Simon M.I."/>
            <person name="Miller J.H."/>
        </authorList>
    </citation>
    <scope>NUCLEOTIDE SEQUENCE [LARGE SCALE GENOMIC DNA]</scope>
    <source>
        <strain>ATCC 51768 / DSM 7523 / JCM 9630 / CIP 104966 / NBRC 100827 / IM2</strain>
    </source>
</reference>
<proteinExistence type="inferred from homology"/>
<keyword id="KW-0227">DNA damage</keyword>
<keyword id="KW-0234">DNA repair</keyword>
<keyword id="KW-0235">DNA replication</keyword>
<keyword id="KW-0255">Endonuclease</keyword>
<keyword id="KW-0269">Exonuclease</keyword>
<keyword id="KW-0378">Hydrolase</keyword>
<keyword id="KW-0460">Magnesium</keyword>
<keyword id="KW-0479">Metal-binding</keyword>
<keyword id="KW-0540">Nuclease</keyword>
<keyword id="KW-1185">Reference proteome</keyword>
<name>FEN_PYRAE</name>
<gene>
    <name evidence="2" type="primary">fen</name>
    <name type="ordered locus">PAE0698</name>
</gene>
<organism>
    <name type="scientific">Pyrobaculum aerophilum (strain ATCC 51768 / DSM 7523 / JCM 9630 / CIP 104966 / NBRC 100827 / IM2)</name>
    <dbReference type="NCBI Taxonomy" id="178306"/>
    <lineage>
        <taxon>Archaea</taxon>
        <taxon>Thermoproteota</taxon>
        <taxon>Thermoprotei</taxon>
        <taxon>Thermoproteales</taxon>
        <taxon>Thermoproteaceae</taxon>
        <taxon>Pyrobaculum</taxon>
    </lineage>
</organism>
<feature type="chain" id="PRO_0000154060" description="Flap endonuclease 1">
    <location>
        <begin position="1"/>
        <end position="346"/>
    </location>
</feature>
<feature type="region of interest" description="N-domain">
    <location>
        <begin position="1"/>
        <end position="102"/>
    </location>
</feature>
<feature type="region of interest" description="I-domain">
    <location>
        <begin position="120"/>
        <end position="261"/>
    </location>
</feature>
<feature type="binding site" evidence="2">
    <location>
        <position position="31"/>
    </location>
    <ligand>
        <name>Mg(2+)</name>
        <dbReference type="ChEBI" id="CHEBI:18420"/>
        <label>1</label>
    </ligand>
</feature>
<feature type="binding site" evidence="2">
    <location>
        <position position="84"/>
    </location>
    <ligand>
        <name>Mg(2+)</name>
        <dbReference type="ChEBI" id="CHEBI:18420"/>
        <label>1</label>
    </ligand>
</feature>
<feature type="binding site" evidence="2">
    <location>
        <position position="156"/>
    </location>
    <ligand>
        <name>Mg(2+)</name>
        <dbReference type="ChEBI" id="CHEBI:18420"/>
        <label>1</label>
    </ligand>
</feature>
<feature type="binding site" evidence="2">
    <location>
        <position position="158"/>
    </location>
    <ligand>
        <name>Mg(2+)</name>
        <dbReference type="ChEBI" id="CHEBI:18420"/>
        <label>1</label>
    </ligand>
</feature>
<feature type="binding site" evidence="2">
    <location>
        <position position="177"/>
    </location>
    <ligand>
        <name>Mg(2+)</name>
        <dbReference type="ChEBI" id="CHEBI:18420"/>
        <label>2</label>
    </ligand>
</feature>
<feature type="binding site" evidence="2">
    <location>
        <position position="179"/>
    </location>
    <ligand>
        <name>Mg(2+)</name>
        <dbReference type="ChEBI" id="CHEBI:18420"/>
        <label>2</label>
    </ligand>
</feature>
<feature type="binding site" evidence="2">
    <location>
        <position position="239"/>
    </location>
    <ligand>
        <name>Mg(2+)</name>
        <dbReference type="ChEBI" id="CHEBI:18420"/>
        <label>2</label>
    </ligand>
</feature>
<comment type="function">
    <text evidence="1">Structure-specific nuclease with 5'-flap endonuclease and 5'-3' exonuclease activities involved in DNA replication and repair. During DNA replication, cleaves the 5'-overhanging flap structure that is generated by displacement synthesis when DNA polymerase encounters the 5'-end of a downstream Okazaki fragment. Binds the unpaired 3'-DNA end and kinks the DNA to facilitate 5' cleavage specificity. Cleaves one nucleotide into the double-stranded DNA from the junction in flap DNA, leaving a nick for ligation. Also involved in the base excision repair (BER) pathway. Acts as a genome stabilization factor that prevents flaps from equilibrating into structures that lead to duplications and deletions. Also possesses 5'-3' exonuclease activity on nicked or gapped double-stranded DNA (By similarity).</text>
</comment>
<comment type="cofactor">
    <cofactor evidence="2">
        <name>Mg(2+)</name>
        <dbReference type="ChEBI" id="CHEBI:18420"/>
    </cofactor>
    <text evidence="2">Binds 2 magnesium ions per subunit. They probably participate in the reaction catalyzed by the enzyme. May bind an additional third magnesium ion after substrate binding.</text>
</comment>
<comment type="subunit">
    <text evidence="2">Interacts with PCNA. PCNA stimulates the nuclease activity without altering cleavage specificity.</text>
</comment>
<comment type="similarity">
    <text evidence="2">Belongs to the XPG/RAD2 endonuclease family. FEN1 subfamily.</text>
</comment>
<accession>Q8ZYN2</accession>
<dbReference type="EC" id="3.1.-.-" evidence="2"/>
<dbReference type="EMBL" id="AE009441">
    <property type="protein sequence ID" value="AAL62961.1"/>
    <property type="molecule type" value="Genomic_DNA"/>
</dbReference>
<dbReference type="RefSeq" id="WP_011007433.1">
    <property type="nucleotide sequence ID" value="NC_003364.1"/>
</dbReference>
<dbReference type="SMR" id="Q8ZYN2"/>
<dbReference type="FunCoup" id="Q8ZYN2">
    <property type="interactions" value="168"/>
</dbReference>
<dbReference type="STRING" id="178306.PAE0698"/>
<dbReference type="EnsemblBacteria" id="AAL62961">
    <property type="protein sequence ID" value="AAL62961"/>
    <property type="gene ID" value="PAE0698"/>
</dbReference>
<dbReference type="GeneID" id="1465187"/>
<dbReference type="KEGG" id="pai:PAE0698"/>
<dbReference type="PATRIC" id="fig|178306.9.peg.506"/>
<dbReference type="eggNOG" id="arCOG04050">
    <property type="taxonomic scope" value="Archaea"/>
</dbReference>
<dbReference type="HOGENOM" id="CLU_032444_0_0_2"/>
<dbReference type="InParanoid" id="Q8ZYN2"/>
<dbReference type="Proteomes" id="UP000002439">
    <property type="component" value="Chromosome"/>
</dbReference>
<dbReference type="GO" id="GO:0008409">
    <property type="term" value="F:5'-3' exonuclease activity"/>
    <property type="evidence" value="ECO:0007669"/>
    <property type="project" value="UniProtKB-UniRule"/>
</dbReference>
<dbReference type="GO" id="GO:0017108">
    <property type="term" value="F:5'-flap endonuclease activity"/>
    <property type="evidence" value="ECO:0000318"/>
    <property type="project" value="GO_Central"/>
</dbReference>
<dbReference type="GO" id="GO:0003677">
    <property type="term" value="F:DNA binding"/>
    <property type="evidence" value="ECO:0007669"/>
    <property type="project" value="UniProtKB-UniRule"/>
</dbReference>
<dbReference type="GO" id="GO:0000287">
    <property type="term" value="F:magnesium ion binding"/>
    <property type="evidence" value="ECO:0007669"/>
    <property type="project" value="UniProtKB-UniRule"/>
</dbReference>
<dbReference type="GO" id="GO:0006281">
    <property type="term" value="P:DNA repair"/>
    <property type="evidence" value="ECO:0007669"/>
    <property type="project" value="UniProtKB-UniRule"/>
</dbReference>
<dbReference type="GO" id="GO:0043137">
    <property type="term" value="P:DNA replication, removal of RNA primer"/>
    <property type="evidence" value="ECO:0007669"/>
    <property type="project" value="UniProtKB-UniRule"/>
</dbReference>
<dbReference type="CDD" id="cd09903">
    <property type="entry name" value="H3TH_FEN1-Arc"/>
    <property type="match status" value="1"/>
</dbReference>
<dbReference type="CDD" id="cd09867">
    <property type="entry name" value="PIN_FEN1"/>
    <property type="match status" value="1"/>
</dbReference>
<dbReference type="FunFam" id="1.10.150.20:FF:000087">
    <property type="entry name" value="Flap endonuclease 1"/>
    <property type="match status" value="1"/>
</dbReference>
<dbReference type="FunFam" id="3.40.50.1010:FF:000016">
    <property type="entry name" value="Flap endonuclease 1"/>
    <property type="match status" value="1"/>
</dbReference>
<dbReference type="Gene3D" id="1.10.150.20">
    <property type="entry name" value="5' to 3' exonuclease, C-terminal subdomain"/>
    <property type="match status" value="1"/>
</dbReference>
<dbReference type="Gene3D" id="3.40.50.1010">
    <property type="entry name" value="5'-nuclease"/>
    <property type="match status" value="1"/>
</dbReference>
<dbReference type="HAMAP" id="MF_00614">
    <property type="entry name" value="Fen"/>
    <property type="match status" value="1"/>
</dbReference>
<dbReference type="InterPro" id="IPR002421">
    <property type="entry name" value="5-3_exonuclease"/>
</dbReference>
<dbReference type="InterPro" id="IPR036279">
    <property type="entry name" value="5-3_exonuclease_C_sf"/>
</dbReference>
<dbReference type="InterPro" id="IPR023426">
    <property type="entry name" value="Flap_endonuc"/>
</dbReference>
<dbReference type="InterPro" id="IPR019973">
    <property type="entry name" value="Flap_endonuc_arc"/>
</dbReference>
<dbReference type="InterPro" id="IPR008918">
    <property type="entry name" value="HhH2"/>
</dbReference>
<dbReference type="InterPro" id="IPR029060">
    <property type="entry name" value="PIN-like_dom_sf"/>
</dbReference>
<dbReference type="InterPro" id="IPR006086">
    <property type="entry name" value="XPG-I_dom"/>
</dbReference>
<dbReference type="InterPro" id="IPR006084">
    <property type="entry name" value="XPG/Rad2"/>
</dbReference>
<dbReference type="InterPro" id="IPR019974">
    <property type="entry name" value="XPG_CS"/>
</dbReference>
<dbReference type="InterPro" id="IPR006085">
    <property type="entry name" value="XPG_DNA_repair_N"/>
</dbReference>
<dbReference type="NCBIfam" id="TIGR03674">
    <property type="entry name" value="fen_arch"/>
    <property type="match status" value="1"/>
</dbReference>
<dbReference type="PANTHER" id="PTHR11081:SF9">
    <property type="entry name" value="FLAP ENDONUCLEASE 1"/>
    <property type="match status" value="1"/>
</dbReference>
<dbReference type="PANTHER" id="PTHR11081">
    <property type="entry name" value="FLAP ENDONUCLEASE FAMILY MEMBER"/>
    <property type="match status" value="1"/>
</dbReference>
<dbReference type="Pfam" id="PF00867">
    <property type="entry name" value="XPG_I"/>
    <property type="match status" value="1"/>
</dbReference>
<dbReference type="Pfam" id="PF00752">
    <property type="entry name" value="XPG_N"/>
    <property type="match status" value="1"/>
</dbReference>
<dbReference type="PRINTS" id="PR00853">
    <property type="entry name" value="XPGRADSUPER"/>
</dbReference>
<dbReference type="SMART" id="SM00475">
    <property type="entry name" value="53EXOc"/>
    <property type="match status" value="1"/>
</dbReference>
<dbReference type="SMART" id="SM00279">
    <property type="entry name" value="HhH2"/>
    <property type="match status" value="1"/>
</dbReference>
<dbReference type="SMART" id="SM00484">
    <property type="entry name" value="XPGI"/>
    <property type="match status" value="1"/>
</dbReference>
<dbReference type="SMART" id="SM00485">
    <property type="entry name" value="XPGN"/>
    <property type="match status" value="1"/>
</dbReference>
<dbReference type="SUPFAM" id="SSF47807">
    <property type="entry name" value="5' to 3' exonuclease, C-terminal subdomain"/>
    <property type="match status" value="1"/>
</dbReference>
<dbReference type="SUPFAM" id="SSF88723">
    <property type="entry name" value="PIN domain-like"/>
    <property type="match status" value="1"/>
</dbReference>
<dbReference type="PROSITE" id="PS00841">
    <property type="entry name" value="XPG_1"/>
    <property type="match status" value="1"/>
</dbReference>
<sequence>MGVTELGKLIGKEVRREVKLESLSGKCIALDAYNALYQFLASIRQPDGTPLMDRAGRITSHLSGLFYRTINLLEAGIRPVYVFDGKPPEFKLAEIEERRKTREKAMEEVLRAIKEGRREDVAKYAKRAVFITSEMVDEAKRLLSYMGVPWVQAPSEGEAQAAYMARKGHCWAVGSQDYDSLLFGSPKLVRNLAVSPKRKIGEEVIELTPEIIELDAVLRALRLKNREQLIDLAILLGTDYNPDGVPGVGPQKALKLIWEFGSLEKLLETVLKGAYFPIDPLEIKKFFLNPPVTDQYATEVRDPDEAALKDFLIREHDFSEERVSKALERLRKARGKLKTSSLDSFF</sequence>
<evidence type="ECO:0000250" key="1"/>
<evidence type="ECO:0000255" key="2">
    <source>
        <dbReference type="HAMAP-Rule" id="MF_00614"/>
    </source>
</evidence>